<keyword id="KW-0963">Cytoplasm</keyword>
<keyword id="KW-0648">Protein biosynthesis</keyword>
<keyword id="KW-1185">Reference proteome</keyword>
<feature type="chain" id="PRO_1000003175" description="Ribosome-recycling factor">
    <location>
        <begin position="1"/>
        <end position="185"/>
    </location>
</feature>
<name>RRF_HAHCH</name>
<accession>Q2SBQ0</accession>
<protein>
    <recommendedName>
        <fullName evidence="1">Ribosome-recycling factor</fullName>
        <shortName evidence="1">RRF</shortName>
    </recommendedName>
    <alternativeName>
        <fullName evidence="1">Ribosome-releasing factor</fullName>
    </alternativeName>
</protein>
<proteinExistence type="inferred from homology"/>
<gene>
    <name evidence="1" type="primary">frr</name>
    <name type="ordered locus">HCH_05249</name>
</gene>
<reference key="1">
    <citation type="journal article" date="2005" name="Nucleic Acids Res.">
        <title>Genomic blueprint of Hahella chejuensis, a marine microbe producing an algicidal agent.</title>
        <authorList>
            <person name="Jeong H."/>
            <person name="Yim J.H."/>
            <person name="Lee C."/>
            <person name="Choi S.-H."/>
            <person name="Park Y.K."/>
            <person name="Yoon S.H."/>
            <person name="Hur C.-G."/>
            <person name="Kang H.-Y."/>
            <person name="Kim D."/>
            <person name="Lee H.H."/>
            <person name="Park K.H."/>
            <person name="Park S.-H."/>
            <person name="Park H.-S."/>
            <person name="Lee H.K."/>
            <person name="Oh T.K."/>
            <person name="Kim J.F."/>
        </authorList>
    </citation>
    <scope>NUCLEOTIDE SEQUENCE [LARGE SCALE GENOMIC DNA]</scope>
    <source>
        <strain>KCTC 2396</strain>
    </source>
</reference>
<dbReference type="EMBL" id="CP000155">
    <property type="protein sequence ID" value="ABC31924.1"/>
    <property type="molecule type" value="Genomic_DNA"/>
</dbReference>
<dbReference type="RefSeq" id="WP_011398988.1">
    <property type="nucleotide sequence ID" value="NC_007645.1"/>
</dbReference>
<dbReference type="SMR" id="Q2SBQ0"/>
<dbReference type="STRING" id="349521.HCH_05249"/>
<dbReference type="KEGG" id="hch:HCH_05249"/>
<dbReference type="eggNOG" id="COG0233">
    <property type="taxonomic scope" value="Bacteria"/>
</dbReference>
<dbReference type="HOGENOM" id="CLU_073981_2_1_6"/>
<dbReference type="OrthoDB" id="9804006at2"/>
<dbReference type="Proteomes" id="UP000000238">
    <property type="component" value="Chromosome"/>
</dbReference>
<dbReference type="GO" id="GO:0005829">
    <property type="term" value="C:cytosol"/>
    <property type="evidence" value="ECO:0007669"/>
    <property type="project" value="GOC"/>
</dbReference>
<dbReference type="GO" id="GO:0043023">
    <property type="term" value="F:ribosomal large subunit binding"/>
    <property type="evidence" value="ECO:0007669"/>
    <property type="project" value="TreeGrafter"/>
</dbReference>
<dbReference type="GO" id="GO:0002184">
    <property type="term" value="P:cytoplasmic translational termination"/>
    <property type="evidence" value="ECO:0007669"/>
    <property type="project" value="TreeGrafter"/>
</dbReference>
<dbReference type="CDD" id="cd00520">
    <property type="entry name" value="RRF"/>
    <property type="match status" value="1"/>
</dbReference>
<dbReference type="FunFam" id="1.10.132.20:FF:000001">
    <property type="entry name" value="Ribosome-recycling factor"/>
    <property type="match status" value="1"/>
</dbReference>
<dbReference type="FunFam" id="3.30.1360.40:FF:000001">
    <property type="entry name" value="Ribosome-recycling factor"/>
    <property type="match status" value="1"/>
</dbReference>
<dbReference type="Gene3D" id="3.30.1360.40">
    <property type="match status" value="1"/>
</dbReference>
<dbReference type="Gene3D" id="1.10.132.20">
    <property type="entry name" value="Ribosome-recycling factor"/>
    <property type="match status" value="1"/>
</dbReference>
<dbReference type="HAMAP" id="MF_00040">
    <property type="entry name" value="RRF"/>
    <property type="match status" value="1"/>
</dbReference>
<dbReference type="InterPro" id="IPR002661">
    <property type="entry name" value="Ribosome_recyc_fac"/>
</dbReference>
<dbReference type="InterPro" id="IPR023584">
    <property type="entry name" value="Ribosome_recyc_fac_dom"/>
</dbReference>
<dbReference type="InterPro" id="IPR036191">
    <property type="entry name" value="RRF_sf"/>
</dbReference>
<dbReference type="NCBIfam" id="TIGR00496">
    <property type="entry name" value="frr"/>
    <property type="match status" value="1"/>
</dbReference>
<dbReference type="PANTHER" id="PTHR20982:SF3">
    <property type="entry name" value="MITOCHONDRIAL RIBOSOME RECYCLING FACTOR PSEUDO 1"/>
    <property type="match status" value="1"/>
</dbReference>
<dbReference type="PANTHER" id="PTHR20982">
    <property type="entry name" value="RIBOSOME RECYCLING FACTOR"/>
    <property type="match status" value="1"/>
</dbReference>
<dbReference type="Pfam" id="PF01765">
    <property type="entry name" value="RRF"/>
    <property type="match status" value="1"/>
</dbReference>
<dbReference type="SUPFAM" id="SSF55194">
    <property type="entry name" value="Ribosome recycling factor, RRF"/>
    <property type="match status" value="1"/>
</dbReference>
<comment type="function">
    <text evidence="1">Responsible for the release of ribosomes from messenger RNA at the termination of protein biosynthesis. May increase the efficiency of translation by recycling ribosomes from one round of translation to another.</text>
</comment>
<comment type="subcellular location">
    <subcellularLocation>
        <location evidence="1">Cytoplasm</location>
    </subcellularLocation>
</comment>
<comment type="similarity">
    <text evidence="1">Belongs to the RRF family.</text>
</comment>
<organism>
    <name type="scientific">Hahella chejuensis (strain KCTC 2396)</name>
    <dbReference type="NCBI Taxonomy" id="349521"/>
    <lineage>
        <taxon>Bacteria</taxon>
        <taxon>Pseudomonadati</taxon>
        <taxon>Pseudomonadota</taxon>
        <taxon>Gammaproteobacteria</taxon>
        <taxon>Oceanospirillales</taxon>
        <taxon>Hahellaceae</taxon>
        <taxon>Hahella</taxon>
    </lineage>
</organism>
<evidence type="ECO:0000255" key="1">
    <source>
        <dbReference type="HAMAP-Rule" id="MF_00040"/>
    </source>
</evidence>
<sequence length="185" mass="20720">MINDIKKQSEQKMKKSMEALGHAFAKIRTGRANPAILESVMVSYYGTDTPLTQIANVVVEDARTLSVTPWEKNMVPQIEKAILKSDLGLNPSTAGTVIRVPMPALTEETRKELVKTARGEAENTRVAIRNLRRDANADIKTLLKDKEISEDEEKRGLDDIQKLTDKYIAEVDRVLAEKEKDLMAV</sequence>